<name>RS10_NITEC</name>
<proteinExistence type="inferred from homology"/>
<dbReference type="EMBL" id="CP000450">
    <property type="protein sequence ID" value="ABI58830.1"/>
    <property type="molecule type" value="Genomic_DNA"/>
</dbReference>
<dbReference type="RefSeq" id="WP_011633672.1">
    <property type="nucleotide sequence ID" value="NC_008344.1"/>
</dbReference>
<dbReference type="SMR" id="Q0AIJ6"/>
<dbReference type="STRING" id="335283.Neut_0557"/>
<dbReference type="KEGG" id="net:Neut_0557"/>
<dbReference type="eggNOG" id="COG0051">
    <property type="taxonomic scope" value="Bacteria"/>
</dbReference>
<dbReference type="HOGENOM" id="CLU_122625_1_3_4"/>
<dbReference type="OrthoDB" id="9804464at2"/>
<dbReference type="Proteomes" id="UP000001966">
    <property type="component" value="Chromosome"/>
</dbReference>
<dbReference type="GO" id="GO:1990904">
    <property type="term" value="C:ribonucleoprotein complex"/>
    <property type="evidence" value="ECO:0007669"/>
    <property type="project" value="UniProtKB-KW"/>
</dbReference>
<dbReference type="GO" id="GO:0005840">
    <property type="term" value="C:ribosome"/>
    <property type="evidence" value="ECO:0007669"/>
    <property type="project" value="UniProtKB-KW"/>
</dbReference>
<dbReference type="GO" id="GO:0003735">
    <property type="term" value="F:structural constituent of ribosome"/>
    <property type="evidence" value="ECO:0007669"/>
    <property type="project" value="InterPro"/>
</dbReference>
<dbReference type="GO" id="GO:0000049">
    <property type="term" value="F:tRNA binding"/>
    <property type="evidence" value="ECO:0007669"/>
    <property type="project" value="UniProtKB-UniRule"/>
</dbReference>
<dbReference type="GO" id="GO:0006412">
    <property type="term" value="P:translation"/>
    <property type="evidence" value="ECO:0007669"/>
    <property type="project" value="UniProtKB-UniRule"/>
</dbReference>
<dbReference type="FunFam" id="3.30.70.600:FF:000001">
    <property type="entry name" value="30S ribosomal protein S10"/>
    <property type="match status" value="1"/>
</dbReference>
<dbReference type="Gene3D" id="3.30.70.600">
    <property type="entry name" value="Ribosomal protein S10 domain"/>
    <property type="match status" value="1"/>
</dbReference>
<dbReference type="HAMAP" id="MF_00508">
    <property type="entry name" value="Ribosomal_uS10"/>
    <property type="match status" value="1"/>
</dbReference>
<dbReference type="InterPro" id="IPR001848">
    <property type="entry name" value="Ribosomal_uS10"/>
</dbReference>
<dbReference type="InterPro" id="IPR018268">
    <property type="entry name" value="Ribosomal_uS10_CS"/>
</dbReference>
<dbReference type="InterPro" id="IPR027486">
    <property type="entry name" value="Ribosomal_uS10_dom"/>
</dbReference>
<dbReference type="InterPro" id="IPR036838">
    <property type="entry name" value="Ribosomal_uS10_dom_sf"/>
</dbReference>
<dbReference type="NCBIfam" id="NF001861">
    <property type="entry name" value="PRK00596.1"/>
    <property type="match status" value="1"/>
</dbReference>
<dbReference type="NCBIfam" id="TIGR01049">
    <property type="entry name" value="rpsJ_bact"/>
    <property type="match status" value="1"/>
</dbReference>
<dbReference type="PANTHER" id="PTHR11700">
    <property type="entry name" value="30S RIBOSOMAL PROTEIN S10 FAMILY MEMBER"/>
    <property type="match status" value="1"/>
</dbReference>
<dbReference type="Pfam" id="PF00338">
    <property type="entry name" value="Ribosomal_S10"/>
    <property type="match status" value="1"/>
</dbReference>
<dbReference type="PRINTS" id="PR00971">
    <property type="entry name" value="RIBOSOMALS10"/>
</dbReference>
<dbReference type="SMART" id="SM01403">
    <property type="entry name" value="Ribosomal_S10"/>
    <property type="match status" value="1"/>
</dbReference>
<dbReference type="SUPFAM" id="SSF54999">
    <property type="entry name" value="Ribosomal protein S10"/>
    <property type="match status" value="1"/>
</dbReference>
<dbReference type="PROSITE" id="PS00361">
    <property type="entry name" value="RIBOSOMAL_S10"/>
    <property type="match status" value="1"/>
</dbReference>
<comment type="function">
    <text evidence="1">Involved in the binding of tRNA to the ribosomes.</text>
</comment>
<comment type="subunit">
    <text evidence="1">Part of the 30S ribosomal subunit.</text>
</comment>
<comment type="similarity">
    <text evidence="1">Belongs to the universal ribosomal protein uS10 family.</text>
</comment>
<sequence>MQNQKIRIRLKAFDYRLIDKSAVEIVETAKRTGAVVKGPVPLPTRIERFDVLRSPHVNKTSRDQFEIRTHLRLMDIIDPTDKTVDALMKLDLPAGVDVEIKL</sequence>
<feature type="chain" id="PRO_1000015068" description="Small ribosomal subunit protein uS10">
    <location>
        <begin position="1"/>
        <end position="102"/>
    </location>
</feature>
<gene>
    <name evidence="1" type="primary">rpsJ</name>
    <name type="ordered locus">Neut_0557</name>
</gene>
<keyword id="KW-0687">Ribonucleoprotein</keyword>
<keyword id="KW-0689">Ribosomal protein</keyword>
<accession>Q0AIJ6</accession>
<protein>
    <recommendedName>
        <fullName evidence="1">Small ribosomal subunit protein uS10</fullName>
    </recommendedName>
    <alternativeName>
        <fullName evidence="2">30S ribosomal protein S10</fullName>
    </alternativeName>
</protein>
<organism>
    <name type="scientific">Nitrosomonas eutropha (strain DSM 101675 / C91 / Nm57)</name>
    <dbReference type="NCBI Taxonomy" id="335283"/>
    <lineage>
        <taxon>Bacteria</taxon>
        <taxon>Pseudomonadati</taxon>
        <taxon>Pseudomonadota</taxon>
        <taxon>Betaproteobacteria</taxon>
        <taxon>Nitrosomonadales</taxon>
        <taxon>Nitrosomonadaceae</taxon>
        <taxon>Nitrosomonas</taxon>
    </lineage>
</organism>
<reference key="1">
    <citation type="journal article" date="2007" name="Environ. Microbiol.">
        <title>Whole-genome analysis of the ammonia-oxidizing bacterium, Nitrosomonas eutropha C91: implications for niche adaptation.</title>
        <authorList>
            <person name="Stein L.Y."/>
            <person name="Arp D.J."/>
            <person name="Berube P.M."/>
            <person name="Chain P.S."/>
            <person name="Hauser L."/>
            <person name="Jetten M.S."/>
            <person name="Klotz M.G."/>
            <person name="Larimer F.W."/>
            <person name="Norton J.M."/>
            <person name="Op den Camp H.J.M."/>
            <person name="Shin M."/>
            <person name="Wei X."/>
        </authorList>
    </citation>
    <scope>NUCLEOTIDE SEQUENCE [LARGE SCALE GENOMIC DNA]</scope>
    <source>
        <strain>DSM 101675 / C91 / Nm57</strain>
    </source>
</reference>
<evidence type="ECO:0000255" key="1">
    <source>
        <dbReference type="HAMAP-Rule" id="MF_00508"/>
    </source>
</evidence>
<evidence type="ECO:0000305" key="2"/>